<reference key="1">
    <citation type="journal article" date="2011" name="J. Bacteriol.">
        <title>Comparative genomics of 28 Salmonella enterica isolates: evidence for CRISPR-mediated adaptive sublineage evolution.</title>
        <authorList>
            <person name="Fricke W.F."/>
            <person name="Mammel M.K."/>
            <person name="McDermott P.F."/>
            <person name="Tartera C."/>
            <person name="White D.G."/>
            <person name="Leclerc J.E."/>
            <person name="Ravel J."/>
            <person name="Cebula T.A."/>
        </authorList>
    </citation>
    <scope>NUCLEOTIDE SEQUENCE [LARGE SCALE GENOMIC DNA]</scope>
    <source>
        <strain>SL483</strain>
    </source>
</reference>
<gene>
    <name evidence="1" type="primary">fliT</name>
    <name type="ordered locus">SeAg_B1158</name>
</gene>
<proteinExistence type="inferred from homology"/>
<keyword id="KW-1005">Bacterial flagellum biogenesis</keyword>
<keyword id="KW-0143">Chaperone</keyword>
<keyword id="KW-0963">Cytoplasm</keyword>
<keyword id="KW-0678">Repressor</keyword>
<keyword id="KW-0804">Transcription</keyword>
<keyword id="KW-0805">Transcription regulation</keyword>
<protein>
    <recommendedName>
        <fullName evidence="1">Flagellar protein FliT</fullName>
    </recommendedName>
</protein>
<feature type="chain" id="PRO_1000138180" description="Flagellar protein FliT">
    <location>
        <begin position="1"/>
        <end position="122"/>
    </location>
</feature>
<feature type="region of interest" description="Required for homodimerization" evidence="1">
    <location>
        <begin position="1"/>
        <end position="50"/>
    </location>
</feature>
<feature type="region of interest" description="FliD binding" evidence="1">
    <location>
        <begin position="60"/>
        <end position="98"/>
    </location>
</feature>
<sequence>MTSTVEFINRWQRIALLSQSLLELAQRGEWDLLLQQEVSYLQSIETVMEKQTPPGITRSIQDMVAGYIKQTLDNEQLLKGLLQQRLDELSSLIGQSTRQKSLNNAYGRLSGMLLVPDAPGAS</sequence>
<evidence type="ECO:0000255" key="1">
    <source>
        <dbReference type="HAMAP-Rule" id="MF_01180"/>
    </source>
</evidence>
<comment type="function">
    <text evidence="1">Dual-function protein that regulates the transcription of class 2 flagellar operons and that also acts as an export chaperone for the filament-capping protein FliD. As a transcriptional regulator, acts as an anti-FlhDC factor; it directly binds FlhC, thus inhibiting the binding of the FlhC/FlhD complex to class 2 promoters, resulting in decreased expression of class 2 flagellar operons. As a chaperone, effects FliD transition to the membrane by preventing its premature polymerization, and by directing it to the export apparatus.</text>
</comment>
<comment type="subunit">
    <text evidence="1">Homodimer. Interacts with FliD and FlhC.</text>
</comment>
<comment type="subcellular location">
    <subcellularLocation>
        <location evidence="1">Cytoplasm</location>
        <location evidence="1">Cytosol</location>
    </subcellularLocation>
</comment>
<comment type="similarity">
    <text evidence="1">Belongs to the FliT family.</text>
</comment>
<name>FLIT_SALA4</name>
<dbReference type="EMBL" id="CP001138">
    <property type="protein sequence ID" value="ACH52544.1"/>
    <property type="molecule type" value="Genomic_DNA"/>
</dbReference>
<dbReference type="RefSeq" id="WP_000204899.1">
    <property type="nucleotide sequence ID" value="NC_011149.1"/>
</dbReference>
<dbReference type="SMR" id="B5F2S6"/>
<dbReference type="KEGG" id="sea:SeAg_B1158"/>
<dbReference type="HOGENOM" id="CLU_155793_1_0_6"/>
<dbReference type="Proteomes" id="UP000008819">
    <property type="component" value="Chromosome"/>
</dbReference>
<dbReference type="GO" id="GO:0005829">
    <property type="term" value="C:cytosol"/>
    <property type="evidence" value="ECO:0007669"/>
    <property type="project" value="UniProtKB-SubCell"/>
</dbReference>
<dbReference type="GO" id="GO:0044781">
    <property type="term" value="P:bacterial-type flagellum organization"/>
    <property type="evidence" value="ECO:0007669"/>
    <property type="project" value="UniProtKB-KW"/>
</dbReference>
<dbReference type="GO" id="GO:1902209">
    <property type="term" value="P:negative regulation of bacterial-type flagellum assembly"/>
    <property type="evidence" value="ECO:0007669"/>
    <property type="project" value="UniProtKB-UniRule"/>
</dbReference>
<dbReference type="GO" id="GO:0006457">
    <property type="term" value="P:protein folding"/>
    <property type="evidence" value="ECO:0007669"/>
    <property type="project" value="UniProtKB-UniRule"/>
</dbReference>
<dbReference type="FunFam" id="1.20.58.380:FF:000002">
    <property type="entry name" value="Flagellar protein FliT"/>
    <property type="match status" value="1"/>
</dbReference>
<dbReference type="Gene3D" id="1.20.58.380">
    <property type="entry name" value="Flagellar protein flit"/>
    <property type="match status" value="1"/>
</dbReference>
<dbReference type="HAMAP" id="MF_01180">
    <property type="entry name" value="FliT"/>
    <property type="match status" value="1"/>
</dbReference>
<dbReference type="InterPro" id="IPR008622">
    <property type="entry name" value="FliT"/>
</dbReference>
<dbReference type="NCBIfam" id="NF007836">
    <property type="entry name" value="PRK10548.1"/>
    <property type="match status" value="1"/>
</dbReference>
<dbReference type="Pfam" id="PF05400">
    <property type="entry name" value="FliT"/>
    <property type="match status" value="1"/>
</dbReference>
<organism>
    <name type="scientific">Salmonella agona (strain SL483)</name>
    <dbReference type="NCBI Taxonomy" id="454166"/>
    <lineage>
        <taxon>Bacteria</taxon>
        <taxon>Pseudomonadati</taxon>
        <taxon>Pseudomonadota</taxon>
        <taxon>Gammaproteobacteria</taxon>
        <taxon>Enterobacterales</taxon>
        <taxon>Enterobacteriaceae</taxon>
        <taxon>Salmonella</taxon>
    </lineage>
</organism>
<accession>B5F2S6</accession>